<keyword id="KW-0012">Acyltransferase</keyword>
<keyword id="KW-0963">Cytoplasm</keyword>
<keyword id="KW-0408">Iron</keyword>
<keyword id="KW-0479">Metal-binding</keyword>
<keyword id="KW-0808">Transferase</keyword>
<keyword id="KW-0819">tRNA processing</keyword>
<comment type="function">
    <text evidence="1">Required for the formation of a threonylcarbamoyl group on adenosine at position 37 (t(6)A37) in tRNAs that read codons beginning with adenine. Is involved in the transfer of the threonylcarbamoyl moiety of threonylcarbamoyl-AMP (TC-AMP) to the N6 group of A37, together with TsaE and TsaB. TsaD likely plays a direct catalytic role in this reaction.</text>
</comment>
<comment type="catalytic activity">
    <reaction evidence="1">
        <text>L-threonylcarbamoyladenylate + adenosine(37) in tRNA = N(6)-L-threonylcarbamoyladenosine(37) in tRNA + AMP + H(+)</text>
        <dbReference type="Rhea" id="RHEA:37059"/>
        <dbReference type="Rhea" id="RHEA-COMP:10162"/>
        <dbReference type="Rhea" id="RHEA-COMP:10163"/>
        <dbReference type="ChEBI" id="CHEBI:15378"/>
        <dbReference type="ChEBI" id="CHEBI:73682"/>
        <dbReference type="ChEBI" id="CHEBI:74411"/>
        <dbReference type="ChEBI" id="CHEBI:74418"/>
        <dbReference type="ChEBI" id="CHEBI:456215"/>
        <dbReference type="EC" id="2.3.1.234"/>
    </reaction>
</comment>
<comment type="cofactor">
    <cofactor evidence="1">
        <name>Fe(2+)</name>
        <dbReference type="ChEBI" id="CHEBI:29033"/>
    </cofactor>
    <text evidence="1">Binds 1 Fe(2+) ion per subunit.</text>
</comment>
<comment type="subcellular location">
    <subcellularLocation>
        <location evidence="1">Cytoplasm</location>
    </subcellularLocation>
</comment>
<comment type="similarity">
    <text evidence="1">Belongs to the KAE1 / TsaD family.</text>
</comment>
<evidence type="ECO:0000255" key="1">
    <source>
        <dbReference type="HAMAP-Rule" id="MF_01445"/>
    </source>
</evidence>
<name>TSAD_LACLS</name>
<gene>
    <name evidence="1" type="primary">tsaD</name>
    <name type="synonym">gcp</name>
    <name type="ordered locus">LACR_0330</name>
</gene>
<proteinExistence type="inferred from homology"/>
<feature type="chain" id="PRO_0000303400" description="tRNA N6-adenosine threonylcarbamoyltransferase">
    <location>
        <begin position="1"/>
        <end position="341"/>
    </location>
</feature>
<feature type="binding site" evidence="1">
    <location>
        <position position="114"/>
    </location>
    <ligand>
        <name>Fe cation</name>
        <dbReference type="ChEBI" id="CHEBI:24875"/>
    </ligand>
</feature>
<feature type="binding site" evidence="1">
    <location>
        <position position="118"/>
    </location>
    <ligand>
        <name>Fe cation</name>
        <dbReference type="ChEBI" id="CHEBI:24875"/>
    </ligand>
</feature>
<feature type="binding site" evidence="1">
    <location>
        <begin position="136"/>
        <end position="140"/>
    </location>
    <ligand>
        <name>substrate</name>
    </ligand>
</feature>
<feature type="binding site" evidence="1">
    <location>
        <position position="169"/>
    </location>
    <ligand>
        <name>substrate</name>
    </ligand>
</feature>
<feature type="binding site" evidence="1">
    <location>
        <position position="182"/>
    </location>
    <ligand>
        <name>substrate</name>
    </ligand>
</feature>
<feature type="binding site" evidence="1">
    <location>
        <position position="186"/>
    </location>
    <ligand>
        <name>substrate</name>
    </ligand>
</feature>
<feature type="binding site" evidence="1">
    <location>
        <position position="278"/>
    </location>
    <ligand>
        <name>substrate</name>
    </ligand>
</feature>
<feature type="binding site" evidence="1">
    <location>
        <position position="304"/>
    </location>
    <ligand>
        <name>Fe cation</name>
        <dbReference type="ChEBI" id="CHEBI:24875"/>
    </ligand>
</feature>
<organism>
    <name type="scientific">Lactococcus lactis subsp. cremoris (strain SK11)</name>
    <dbReference type="NCBI Taxonomy" id="272622"/>
    <lineage>
        <taxon>Bacteria</taxon>
        <taxon>Bacillati</taxon>
        <taxon>Bacillota</taxon>
        <taxon>Bacilli</taxon>
        <taxon>Lactobacillales</taxon>
        <taxon>Streptococcaceae</taxon>
        <taxon>Lactococcus</taxon>
        <taxon>Lactococcus cremoris subsp. cremoris</taxon>
    </lineage>
</organism>
<reference key="1">
    <citation type="journal article" date="2006" name="Proc. Natl. Acad. Sci. U.S.A.">
        <title>Comparative genomics of the lactic acid bacteria.</title>
        <authorList>
            <person name="Makarova K.S."/>
            <person name="Slesarev A."/>
            <person name="Wolf Y.I."/>
            <person name="Sorokin A."/>
            <person name="Mirkin B."/>
            <person name="Koonin E.V."/>
            <person name="Pavlov A."/>
            <person name="Pavlova N."/>
            <person name="Karamychev V."/>
            <person name="Polouchine N."/>
            <person name="Shakhova V."/>
            <person name="Grigoriev I."/>
            <person name="Lou Y."/>
            <person name="Rohksar D."/>
            <person name="Lucas S."/>
            <person name="Huang K."/>
            <person name="Goodstein D.M."/>
            <person name="Hawkins T."/>
            <person name="Plengvidhya V."/>
            <person name="Welker D."/>
            <person name="Hughes J."/>
            <person name="Goh Y."/>
            <person name="Benson A."/>
            <person name="Baldwin K."/>
            <person name="Lee J.-H."/>
            <person name="Diaz-Muniz I."/>
            <person name="Dosti B."/>
            <person name="Smeianov V."/>
            <person name="Wechter W."/>
            <person name="Barabote R."/>
            <person name="Lorca G."/>
            <person name="Altermann E."/>
            <person name="Barrangou R."/>
            <person name="Ganesan B."/>
            <person name="Xie Y."/>
            <person name="Rawsthorne H."/>
            <person name="Tamir D."/>
            <person name="Parker C."/>
            <person name="Breidt F."/>
            <person name="Broadbent J.R."/>
            <person name="Hutkins R."/>
            <person name="O'Sullivan D."/>
            <person name="Steele J."/>
            <person name="Unlu G."/>
            <person name="Saier M.H. Jr."/>
            <person name="Klaenhammer T."/>
            <person name="Richardson P."/>
            <person name="Kozyavkin S."/>
            <person name="Weimer B.C."/>
            <person name="Mills D.A."/>
        </authorList>
    </citation>
    <scope>NUCLEOTIDE SEQUENCE [LARGE SCALE GENOMIC DNA]</scope>
    <source>
        <strain>SK11</strain>
    </source>
</reference>
<sequence>MKDNYILAFETSCDETSVAILKNGSELLCNIIASQINSHKRFGGVVPEIASRHHVEQITVCIEAALEEAEISADQLTAVAVTEGPGLNGALLVGIMAAKTFAWANHLPLIPVNHMAGHLMAASLVDTIEYPAMALLVSGGHSELVYVEKEGSYKKVGETRDDAAGEAYDKVGRVMGLTYPSGKVIDELAHKGQDTYNFPRAMMNTHEVEFSFSGLKSAFINLVHNENQKGNDVIANDLENLAASFQAAVVDVLMAKTKLAMEKYPVKTLIIGGGVSANQGLRERLSAEITDEKLIIPPLRLCGDNAGMIAAAAYIEWKKGLENVQAGLDLNAKPSLVFEDM</sequence>
<protein>
    <recommendedName>
        <fullName evidence="1">tRNA N6-adenosine threonylcarbamoyltransferase</fullName>
        <ecNumber evidence="1">2.3.1.234</ecNumber>
    </recommendedName>
    <alternativeName>
        <fullName evidence="1">N6-L-threonylcarbamoyladenine synthase</fullName>
        <shortName evidence="1">t(6)A synthase</shortName>
    </alternativeName>
    <alternativeName>
        <fullName evidence="1">t(6)A37 threonylcarbamoyladenosine biosynthesis protein TsaD</fullName>
    </alternativeName>
    <alternativeName>
        <fullName evidence="1">tRNA threonylcarbamoyladenosine biosynthesis protein TsaD</fullName>
    </alternativeName>
</protein>
<dbReference type="EC" id="2.3.1.234" evidence="1"/>
<dbReference type="EMBL" id="CP000425">
    <property type="protein sequence ID" value="ABJ71938.1"/>
    <property type="molecule type" value="Genomic_DNA"/>
</dbReference>
<dbReference type="RefSeq" id="WP_011675348.1">
    <property type="nucleotide sequence ID" value="NC_008527.1"/>
</dbReference>
<dbReference type="SMR" id="Q032D4"/>
<dbReference type="GeneID" id="61108616"/>
<dbReference type="KEGG" id="llc:LACR_0330"/>
<dbReference type="HOGENOM" id="CLU_023208_0_2_9"/>
<dbReference type="Proteomes" id="UP000000240">
    <property type="component" value="Chromosome"/>
</dbReference>
<dbReference type="GO" id="GO:0005737">
    <property type="term" value="C:cytoplasm"/>
    <property type="evidence" value="ECO:0007669"/>
    <property type="project" value="UniProtKB-SubCell"/>
</dbReference>
<dbReference type="GO" id="GO:0005506">
    <property type="term" value="F:iron ion binding"/>
    <property type="evidence" value="ECO:0007669"/>
    <property type="project" value="UniProtKB-UniRule"/>
</dbReference>
<dbReference type="GO" id="GO:0061711">
    <property type="term" value="F:N(6)-L-threonylcarbamoyladenine synthase activity"/>
    <property type="evidence" value="ECO:0007669"/>
    <property type="project" value="UniProtKB-EC"/>
</dbReference>
<dbReference type="GO" id="GO:0002949">
    <property type="term" value="P:tRNA threonylcarbamoyladenosine modification"/>
    <property type="evidence" value="ECO:0007669"/>
    <property type="project" value="UniProtKB-UniRule"/>
</dbReference>
<dbReference type="CDD" id="cd24133">
    <property type="entry name" value="ASKHA_NBD_TsaD_bac"/>
    <property type="match status" value="1"/>
</dbReference>
<dbReference type="FunFam" id="3.30.420.40:FF:000012">
    <property type="entry name" value="tRNA N6-adenosine threonylcarbamoyltransferase"/>
    <property type="match status" value="1"/>
</dbReference>
<dbReference type="FunFam" id="3.30.420.40:FF:000040">
    <property type="entry name" value="tRNA N6-adenosine threonylcarbamoyltransferase"/>
    <property type="match status" value="1"/>
</dbReference>
<dbReference type="Gene3D" id="3.30.420.40">
    <property type="match status" value="2"/>
</dbReference>
<dbReference type="HAMAP" id="MF_01445">
    <property type="entry name" value="TsaD"/>
    <property type="match status" value="1"/>
</dbReference>
<dbReference type="InterPro" id="IPR043129">
    <property type="entry name" value="ATPase_NBD"/>
</dbReference>
<dbReference type="InterPro" id="IPR000905">
    <property type="entry name" value="Gcp-like_dom"/>
</dbReference>
<dbReference type="InterPro" id="IPR017861">
    <property type="entry name" value="KAE1/TsaD"/>
</dbReference>
<dbReference type="InterPro" id="IPR022450">
    <property type="entry name" value="TsaD"/>
</dbReference>
<dbReference type="NCBIfam" id="TIGR00329">
    <property type="entry name" value="gcp_kae1"/>
    <property type="match status" value="1"/>
</dbReference>
<dbReference type="NCBIfam" id="TIGR03723">
    <property type="entry name" value="T6A_TsaD_YgjD"/>
    <property type="match status" value="1"/>
</dbReference>
<dbReference type="PANTHER" id="PTHR11735">
    <property type="entry name" value="TRNA N6-ADENOSINE THREONYLCARBAMOYLTRANSFERASE"/>
    <property type="match status" value="1"/>
</dbReference>
<dbReference type="PANTHER" id="PTHR11735:SF6">
    <property type="entry name" value="TRNA N6-ADENOSINE THREONYLCARBAMOYLTRANSFERASE, MITOCHONDRIAL"/>
    <property type="match status" value="1"/>
</dbReference>
<dbReference type="Pfam" id="PF00814">
    <property type="entry name" value="TsaD"/>
    <property type="match status" value="1"/>
</dbReference>
<dbReference type="PRINTS" id="PR00789">
    <property type="entry name" value="OSIALOPTASE"/>
</dbReference>
<dbReference type="SUPFAM" id="SSF53067">
    <property type="entry name" value="Actin-like ATPase domain"/>
    <property type="match status" value="1"/>
</dbReference>
<accession>Q032D4</accession>